<protein>
    <recommendedName>
        <fullName>Doublesex- and mab-3-related transcription factor A1</fullName>
    </recommendedName>
</protein>
<reference key="1">
    <citation type="journal article" date="2004" name="Nat. Genet.">
        <title>Complete sequencing and characterization of 21,243 full-length human cDNAs.</title>
        <authorList>
            <person name="Ota T."/>
            <person name="Suzuki Y."/>
            <person name="Nishikawa T."/>
            <person name="Otsuki T."/>
            <person name="Sugiyama T."/>
            <person name="Irie R."/>
            <person name="Wakamatsu A."/>
            <person name="Hayashi K."/>
            <person name="Sato H."/>
            <person name="Nagai K."/>
            <person name="Kimura K."/>
            <person name="Makita H."/>
            <person name="Sekine M."/>
            <person name="Obayashi M."/>
            <person name="Nishi T."/>
            <person name="Shibahara T."/>
            <person name="Tanaka T."/>
            <person name="Ishii S."/>
            <person name="Yamamoto J."/>
            <person name="Saito K."/>
            <person name="Kawai Y."/>
            <person name="Isono Y."/>
            <person name="Nakamura Y."/>
            <person name="Nagahari K."/>
            <person name="Murakami K."/>
            <person name="Yasuda T."/>
            <person name="Iwayanagi T."/>
            <person name="Wagatsuma M."/>
            <person name="Shiratori A."/>
            <person name="Sudo H."/>
            <person name="Hosoiri T."/>
            <person name="Kaku Y."/>
            <person name="Kodaira H."/>
            <person name="Kondo H."/>
            <person name="Sugawara M."/>
            <person name="Takahashi M."/>
            <person name="Kanda K."/>
            <person name="Yokoi T."/>
            <person name="Furuya T."/>
            <person name="Kikkawa E."/>
            <person name="Omura Y."/>
            <person name="Abe K."/>
            <person name="Kamihara K."/>
            <person name="Katsuta N."/>
            <person name="Sato K."/>
            <person name="Tanikawa M."/>
            <person name="Yamazaki M."/>
            <person name="Ninomiya K."/>
            <person name="Ishibashi T."/>
            <person name="Yamashita H."/>
            <person name="Murakawa K."/>
            <person name="Fujimori K."/>
            <person name="Tanai H."/>
            <person name="Kimata M."/>
            <person name="Watanabe M."/>
            <person name="Hiraoka S."/>
            <person name="Chiba Y."/>
            <person name="Ishida S."/>
            <person name="Ono Y."/>
            <person name="Takiguchi S."/>
            <person name="Watanabe S."/>
            <person name="Yosida M."/>
            <person name="Hotuta T."/>
            <person name="Kusano J."/>
            <person name="Kanehori K."/>
            <person name="Takahashi-Fujii A."/>
            <person name="Hara H."/>
            <person name="Tanase T.-O."/>
            <person name="Nomura Y."/>
            <person name="Togiya S."/>
            <person name="Komai F."/>
            <person name="Hara R."/>
            <person name="Takeuchi K."/>
            <person name="Arita M."/>
            <person name="Imose N."/>
            <person name="Musashino K."/>
            <person name="Yuuki H."/>
            <person name="Oshima A."/>
            <person name="Sasaki N."/>
            <person name="Aotsuka S."/>
            <person name="Yoshikawa Y."/>
            <person name="Matsunawa H."/>
            <person name="Ichihara T."/>
            <person name="Shiohata N."/>
            <person name="Sano S."/>
            <person name="Moriya S."/>
            <person name="Momiyama H."/>
            <person name="Satoh N."/>
            <person name="Takami S."/>
            <person name="Terashima Y."/>
            <person name="Suzuki O."/>
            <person name="Nakagawa S."/>
            <person name="Senoh A."/>
            <person name="Mizoguchi H."/>
            <person name="Goto Y."/>
            <person name="Shimizu F."/>
            <person name="Wakebe H."/>
            <person name="Hishigaki H."/>
            <person name="Watanabe T."/>
            <person name="Sugiyama A."/>
            <person name="Takemoto M."/>
            <person name="Kawakami B."/>
            <person name="Yamazaki M."/>
            <person name="Watanabe K."/>
            <person name="Kumagai A."/>
            <person name="Itakura S."/>
            <person name="Fukuzumi Y."/>
            <person name="Fujimori Y."/>
            <person name="Komiyama M."/>
            <person name="Tashiro H."/>
            <person name="Tanigami A."/>
            <person name="Fujiwara T."/>
            <person name="Ono T."/>
            <person name="Yamada K."/>
            <person name="Fujii Y."/>
            <person name="Ozaki K."/>
            <person name="Hirao M."/>
            <person name="Ohmori Y."/>
            <person name="Kawabata A."/>
            <person name="Hikiji T."/>
            <person name="Kobatake N."/>
            <person name="Inagaki H."/>
            <person name="Ikema Y."/>
            <person name="Okamoto S."/>
            <person name="Okitani R."/>
            <person name="Kawakami T."/>
            <person name="Noguchi S."/>
            <person name="Itoh T."/>
            <person name="Shigeta K."/>
            <person name="Senba T."/>
            <person name="Matsumura K."/>
            <person name="Nakajima Y."/>
            <person name="Mizuno T."/>
            <person name="Morinaga M."/>
            <person name="Sasaki M."/>
            <person name="Togashi T."/>
            <person name="Oyama M."/>
            <person name="Hata H."/>
            <person name="Watanabe M."/>
            <person name="Komatsu T."/>
            <person name="Mizushima-Sugano J."/>
            <person name="Satoh T."/>
            <person name="Shirai Y."/>
            <person name="Takahashi Y."/>
            <person name="Nakagawa K."/>
            <person name="Okumura K."/>
            <person name="Nagase T."/>
            <person name="Nomura N."/>
            <person name="Kikuchi H."/>
            <person name="Masuho Y."/>
            <person name="Yamashita R."/>
            <person name="Nakai K."/>
            <person name="Yada T."/>
            <person name="Nakamura Y."/>
            <person name="Ohara O."/>
            <person name="Isogai T."/>
            <person name="Sugano S."/>
        </authorList>
    </citation>
    <scope>NUCLEOTIDE SEQUENCE [LARGE SCALE MRNA]</scope>
    <source>
        <tissue>Kidney</tissue>
    </source>
</reference>
<reference key="2">
    <citation type="journal article" date="2004" name="Nature">
        <title>DNA sequence and analysis of human chromosome 9.</title>
        <authorList>
            <person name="Humphray S.J."/>
            <person name="Oliver K."/>
            <person name="Hunt A.R."/>
            <person name="Plumb R.W."/>
            <person name="Loveland J.E."/>
            <person name="Howe K.L."/>
            <person name="Andrews T.D."/>
            <person name="Searle S."/>
            <person name="Hunt S.E."/>
            <person name="Scott C.E."/>
            <person name="Jones M.C."/>
            <person name="Ainscough R."/>
            <person name="Almeida J.P."/>
            <person name="Ambrose K.D."/>
            <person name="Ashwell R.I.S."/>
            <person name="Babbage A.K."/>
            <person name="Babbage S."/>
            <person name="Bagguley C.L."/>
            <person name="Bailey J."/>
            <person name="Banerjee R."/>
            <person name="Barker D.J."/>
            <person name="Barlow K.F."/>
            <person name="Bates K."/>
            <person name="Beasley H."/>
            <person name="Beasley O."/>
            <person name="Bird C.P."/>
            <person name="Bray-Allen S."/>
            <person name="Brown A.J."/>
            <person name="Brown J.Y."/>
            <person name="Burford D."/>
            <person name="Burrill W."/>
            <person name="Burton J."/>
            <person name="Carder C."/>
            <person name="Carter N.P."/>
            <person name="Chapman J.C."/>
            <person name="Chen Y."/>
            <person name="Clarke G."/>
            <person name="Clark S.Y."/>
            <person name="Clee C.M."/>
            <person name="Clegg S."/>
            <person name="Collier R.E."/>
            <person name="Corby N."/>
            <person name="Crosier M."/>
            <person name="Cummings A.T."/>
            <person name="Davies J."/>
            <person name="Dhami P."/>
            <person name="Dunn M."/>
            <person name="Dutta I."/>
            <person name="Dyer L.W."/>
            <person name="Earthrowl M.E."/>
            <person name="Faulkner L."/>
            <person name="Fleming C.J."/>
            <person name="Frankish A."/>
            <person name="Frankland J.A."/>
            <person name="French L."/>
            <person name="Fricker D.G."/>
            <person name="Garner P."/>
            <person name="Garnett J."/>
            <person name="Ghori J."/>
            <person name="Gilbert J.G.R."/>
            <person name="Glison C."/>
            <person name="Grafham D.V."/>
            <person name="Gribble S."/>
            <person name="Griffiths C."/>
            <person name="Griffiths-Jones S."/>
            <person name="Grocock R."/>
            <person name="Guy J."/>
            <person name="Hall R.E."/>
            <person name="Hammond S."/>
            <person name="Harley J.L."/>
            <person name="Harrison E.S.I."/>
            <person name="Hart E.A."/>
            <person name="Heath P.D."/>
            <person name="Henderson C.D."/>
            <person name="Hopkins B.L."/>
            <person name="Howard P.J."/>
            <person name="Howden P.J."/>
            <person name="Huckle E."/>
            <person name="Johnson C."/>
            <person name="Johnson D."/>
            <person name="Joy A.A."/>
            <person name="Kay M."/>
            <person name="Keenan S."/>
            <person name="Kershaw J.K."/>
            <person name="Kimberley A.M."/>
            <person name="King A."/>
            <person name="Knights A."/>
            <person name="Laird G.K."/>
            <person name="Langford C."/>
            <person name="Lawlor S."/>
            <person name="Leongamornlert D.A."/>
            <person name="Leversha M."/>
            <person name="Lloyd C."/>
            <person name="Lloyd D.M."/>
            <person name="Lovell J."/>
            <person name="Martin S."/>
            <person name="Mashreghi-Mohammadi M."/>
            <person name="Matthews L."/>
            <person name="McLaren S."/>
            <person name="McLay K.E."/>
            <person name="McMurray A."/>
            <person name="Milne S."/>
            <person name="Nickerson T."/>
            <person name="Nisbett J."/>
            <person name="Nordsiek G."/>
            <person name="Pearce A.V."/>
            <person name="Peck A.I."/>
            <person name="Porter K.M."/>
            <person name="Pandian R."/>
            <person name="Pelan S."/>
            <person name="Phillimore B."/>
            <person name="Povey S."/>
            <person name="Ramsey Y."/>
            <person name="Rand V."/>
            <person name="Scharfe M."/>
            <person name="Sehra H.K."/>
            <person name="Shownkeen R."/>
            <person name="Sims S.K."/>
            <person name="Skuce C.D."/>
            <person name="Smith M."/>
            <person name="Steward C.A."/>
            <person name="Swarbreck D."/>
            <person name="Sycamore N."/>
            <person name="Tester J."/>
            <person name="Thorpe A."/>
            <person name="Tracey A."/>
            <person name="Tromans A."/>
            <person name="Thomas D.W."/>
            <person name="Wall M."/>
            <person name="Wallis J.M."/>
            <person name="West A.P."/>
            <person name="Whitehead S.L."/>
            <person name="Willey D.L."/>
            <person name="Williams S.A."/>
            <person name="Wilming L."/>
            <person name="Wray P.W."/>
            <person name="Young L."/>
            <person name="Ashurst J.L."/>
            <person name="Coulson A."/>
            <person name="Blocker H."/>
            <person name="Durbin R.M."/>
            <person name="Sulston J.E."/>
            <person name="Hubbard T."/>
            <person name="Jackson M.J."/>
            <person name="Bentley D.R."/>
            <person name="Beck S."/>
            <person name="Rogers J."/>
            <person name="Dunham I."/>
        </authorList>
    </citation>
    <scope>NUCLEOTIDE SEQUENCE [LARGE SCALE GENOMIC DNA]</scope>
</reference>
<reference key="3">
    <citation type="journal article" date="2004" name="Genome Res.">
        <title>The status, quality, and expansion of the NIH full-length cDNA project: the Mammalian Gene Collection (MGC).</title>
        <authorList>
            <consortium name="The MGC Project Team"/>
        </authorList>
    </citation>
    <scope>NUCLEOTIDE SEQUENCE [LARGE SCALE MRNA]</scope>
</reference>
<reference key="4">
    <citation type="journal article" date="2002" name="Genomics">
        <title>Novel paralogy relations among human chromosomes support a link between the phylogeny of doublesex-related genes and the evolution of sex determination.</title>
        <authorList>
            <person name="Ottolenghi C."/>
            <person name="Fellous M."/>
            <person name="Barbieri M."/>
            <person name="McElreavey K."/>
        </authorList>
    </citation>
    <scope>NUCLEOTIDE SEQUENCE [MRNA] OF 98-360</scope>
    <scope>TISSUE SPECIFICITY</scope>
    <source>
        <tissue>Testis</tissue>
    </source>
</reference>
<reference key="5">
    <citation type="journal article" date="2006" name="Science">
        <title>The consensus coding sequences of human breast and colorectal cancers.</title>
        <authorList>
            <person name="Sjoeblom T."/>
            <person name="Jones S."/>
            <person name="Wood L.D."/>
            <person name="Parsons D.W."/>
            <person name="Lin J."/>
            <person name="Barber T.D."/>
            <person name="Mandelker D."/>
            <person name="Leary R.J."/>
            <person name="Ptak J."/>
            <person name="Silliman N."/>
            <person name="Szabo S."/>
            <person name="Buckhaults P."/>
            <person name="Farrell C."/>
            <person name="Meeh P."/>
            <person name="Markowitz S.D."/>
            <person name="Willis J."/>
            <person name="Dawson D."/>
            <person name="Willson J.K.V."/>
            <person name="Gazdar A.F."/>
            <person name="Hartigan J."/>
            <person name="Wu L."/>
            <person name="Liu C."/>
            <person name="Parmigiani G."/>
            <person name="Park B.H."/>
            <person name="Bachman K.E."/>
            <person name="Papadopoulos N."/>
            <person name="Vogelstein B."/>
            <person name="Kinzler K.W."/>
            <person name="Velculescu V.E."/>
        </authorList>
    </citation>
    <scope>VARIANT [LARGE SCALE ANALYSIS] CYS-342</scope>
</reference>
<keyword id="KW-0238">DNA-binding</keyword>
<keyword id="KW-0479">Metal-binding</keyword>
<keyword id="KW-0539">Nucleus</keyword>
<keyword id="KW-1267">Proteomics identification</keyword>
<keyword id="KW-1185">Reference proteome</keyword>
<keyword id="KW-0804">Transcription</keyword>
<keyword id="KW-0805">Transcription regulation</keyword>
<keyword id="KW-0862">Zinc</keyword>
<gene>
    <name type="primary">DMRTA1</name>
    <name type="synonym">DMO</name>
</gene>
<organism>
    <name type="scientific">Homo sapiens</name>
    <name type="common">Human</name>
    <dbReference type="NCBI Taxonomy" id="9606"/>
    <lineage>
        <taxon>Eukaryota</taxon>
        <taxon>Metazoa</taxon>
        <taxon>Chordata</taxon>
        <taxon>Craniata</taxon>
        <taxon>Vertebrata</taxon>
        <taxon>Euteleostomi</taxon>
        <taxon>Mammalia</taxon>
        <taxon>Eutheria</taxon>
        <taxon>Euarchontoglires</taxon>
        <taxon>Primates</taxon>
        <taxon>Haplorrhini</taxon>
        <taxon>Catarrhini</taxon>
        <taxon>Hominidae</taxon>
        <taxon>Homo</taxon>
    </lineage>
</organism>
<accession>Q5VZB9</accession>
<accession>A1L481</accession>
<accession>Q8N8Y9</accession>
<accession>Q9H4B9</accession>
<evidence type="ECO:0000255" key="1"/>
<evidence type="ECO:0000255" key="2">
    <source>
        <dbReference type="PROSITE-ProRule" id="PRU00070"/>
    </source>
</evidence>
<evidence type="ECO:0000256" key="3">
    <source>
        <dbReference type="SAM" id="MobiDB-lite"/>
    </source>
</evidence>
<evidence type="ECO:0000269" key="4">
    <source>
    </source>
</evidence>
<evidence type="ECO:0000269" key="5">
    <source>
    </source>
</evidence>
<evidence type="ECO:0000305" key="6"/>
<comment type="interaction">
    <interactant intactId="EBI-3939812">
        <id>Q5VZB9</id>
    </interactant>
    <interactant intactId="EBI-10975473">
        <id>O60333-2</id>
        <label>KIF1B</label>
    </interactant>
    <organismsDiffer>false</organismsDiffer>
    <experiments>3</experiments>
</comment>
<comment type="interaction">
    <interactant intactId="EBI-3939812">
        <id>Q5VZB9</id>
    </interactant>
    <interactant intactId="EBI-396669">
        <id>Q9Y3C5</id>
        <label>RNF11</label>
    </interactant>
    <organismsDiffer>false</organismsDiffer>
    <experiments>3</experiments>
</comment>
<comment type="interaction">
    <interactant intactId="EBI-3939812">
        <id>Q5VZB9</id>
    </interactant>
    <interactant intactId="EBI-720609">
        <id>O76024</id>
        <label>WFS1</label>
    </interactant>
    <organismsDiffer>false</organismsDiffer>
    <experiments>3</experiments>
</comment>
<comment type="subcellular location">
    <subcellularLocation>
        <location evidence="2">Nucleus</location>
    </subcellularLocation>
</comment>
<comment type="tissue specificity">
    <text evidence="4">Expressed in liver, kidney, pancreas, prostate and weakly detected in testis and ovary.</text>
</comment>
<comment type="similarity">
    <text evidence="6">Belongs to the DMRT family.</text>
</comment>
<feature type="chain" id="PRO_0000242700" description="Doublesex- and mab-3-related transcription factor A1">
    <location>
        <begin position="1"/>
        <end position="504"/>
    </location>
</feature>
<feature type="domain" description="DMA" evidence="1">
    <location>
        <begin position="327"/>
        <end position="362"/>
    </location>
</feature>
<feature type="DNA-binding region" description="DM" evidence="2">
    <location>
        <begin position="97"/>
        <end position="144"/>
    </location>
</feature>
<feature type="region of interest" description="Disordered" evidence="3">
    <location>
        <begin position="1"/>
        <end position="27"/>
    </location>
</feature>
<feature type="region of interest" description="Disordered" evidence="3">
    <location>
        <begin position="170"/>
        <end position="192"/>
    </location>
</feature>
<feature type="region of interest" description="Disordered" evidence="3">
    <location>
        <begin position="266"/>
        <end position="307"/>
    </location>
</feature>
<feature type="compositionally biased region" description="Basic and acidic residues" evidence="3">
    <location>
        <begin position="1"/>
        <end position="13"/>
    </location>
</feature>
<feature type="compositionally biased region" description="Low complexity" evidence="3">
    <location>
        <begin position="293"/>
        <end position="306"/>
    </location>
</feature>
<feature type="sequence variant" id="VAR_036331" description="In a colorectal cancer sample; somatic mutation; dbSNP:rs372873186." evidence="5">
    <original>R</original>
    <variation>C</variation>
    <location>
        <position position="342"/>
    </location>
</feature>
<feature type="sequence conflict" description="In Ref. 1; BAC04672." evidence="6" ref="1">
    <original>V</original>
    <variation>F</variation>
    <location>
        <position position="212"/>
    </location>
</feature>
<feature type="sequence conflict" description="In Ref. 1; BAC04672." evidence="6" ref="1">
    <original>A</original>
    <variation>S</variation>
    <location>
        <position position="314"/>
    </location>
</feature>
<sequence>MERSQCGSRDRGVSGRPHLAPGLVVAAPPPPSPALPVPSGMQVPPAFLRPPSLFLRAAAAAAAAAAATSGSGGCPPAPGLESGVGAVGCGYPRTPKCARCRNHGVVSALKGHKRFCRWRDCACAKCTLIAERQRVMAAQVALRRQQAQEESEARGLQRLLCSGLSWPPGGRASGGGGRAENPQSTGGPAAGAALGLGALRQASGSATPAFEVFQQDYPEEKQEQKESKCESCQNGQEELISKSHQLYLGSSSRSNGVIGKQSIGSSISEYSNKPDSILSPHPGEQSGGEESPRSLSSSDLESGNESEWVKDLTATKASLPTVSSRPRDPLDILTKIFPNYRRSRLEGILRFCKGDVVQAIEQVLNGKEHKPDNRNLANSEELENTAFQRASSFSLAGIGFGTLGNKSAFSPLQTTSASYGGDSSLYGVNPRVGISPLRLAYSSAGRGLSGFMSPYLTPGLVPTLPFRPALDYAFSGMIRDSSYLSSKDSITCGRLYFRPNQDNP</sequence>
<name>DMRTA_HUMAN</name>
<dbReference type="EMBL" id="AK096011">
    <property type="protein sequence ID" value="BAC04672.1"/>
    <property type="molecule type" value="mRNA"/>
</dbReference>
<dbReference type="EMBL" id="AL161730">
    <property type="status" value="NOT_ANNOTATED_CDS"/>
    <property type="molecule type" value="Genomic_DNA"/>
</dbReference>
<dbReference type="EMBL" id="BC130435">
    <property type="protein sequence ID" value="AAI30436.1"/>
    <property type="molecule type" value="mRNA"/>
</dbReference>
<dbReference type="EMBL" id="BC130437">
    <property type="protein sequence ID" value="AAI30438.1"/>
    <property type="molecule type" value="mRNA"/>
</dbReference>
<dbReference type="EMBL" id="AJ290954">
    <property type="protein sequence ID" value="CAC16590.1"/>
    <property type="molecule type" value="mRNA"/>
</dbReference>
<dbReference type="CCDS" id="CCDS6514.1"/>
<dbReference type="RefSeq" id="NP_071443.2">
    <property type="nucleotide sequence ID" value="NM_022160.3"/>
</dbReference>
<dbReference type="SMR" id="Q5VZB9"/>
<dbReference type="BioGRID" id="122014">
    <property type="interactions" value="3"/>
</dbReference>
<dbReference type="FunCoup" id="Q5VZB9">
    <property type="interactions" value="831"/>
</dbReference>
<dbReference type="IntAct" id="Q5VZB9">
    <property type="interactions" value="6"/>
</dbReference>
<dbReference type="STRING" id="9606.ENSP00000319651"/>
<dbReference type="GlyGen" id="Q5VZB9">
    <property type="glycosylation" value="1 site"/>
</dbReference>
<dbReference type="iPTMnet" id="Q5VZB9"/>
<dbReference type="PhosphoSitePlus" id="Q5VZB9"/>
<dbReference type="BioMuta" id="DMRTA1"/>
<dbReference type="DMDM" id="74747785"/>
<dbReference type="MassIVE" id="Q5VZB9"/>
<dbReference type="PaxDb" id="9606-ENSP00000319651"/>
<dbReference type="PeptideAtlas" id="Q5VZB9"/>
<dbReference type="ProteomicsDB" id="65689"/>
<dbReference type="Pumba" id="Q5VZB9"/>
<dbReference type="Antibodypedia" id="24917">
    <property type="antibodies" value="139 antibodies from 27 providers"/>
</dbReference>
<dbReference type="DNASU" id="63951"/>
<dbReference type="Ensembl" id="ENST00000325870.3">
    <property type="protein sequence ID" value="ENSP00000319651.1"/>
    <property type="gene ID" value="ENSG00000176399.4"/>
</dbReference>
<dbReference type="GeneID" id="63951"/>
<dbReference type="KEGG" id="hsa:63951"/>
<dbReference type="MANE-Select" id="ENST00000325870.3">
    <property type="protein sequence ID" value="ENSP00000319651.1"/>
    <property type="RefSeq nucleotide sequence ID" value="NM_022160.3"/>
    <property type="RefSeq protein sequence ID" value="NP_071443.2"/>
</dbReference>
<dbReference type="UCSC" id="uc003zpp.2">
    <property type="organism name" value="human"/>
</dbReference>
<dbReference type="AGR" id="HGNC:13826"/>
<dbReference type="CTD" id="63951"/>
<dbReference type="DisGeNET" id="63951"/>
<dbReference type="GeneCards" id="DMRTA1"/>
<dbReference type="HGNC" id="HGNC:13826">
    <property type="gene designation" value="DMRTA1"/>
</dbReference>
<dbReference type="HPA" id="ENSG00000176399">
    <property type="expression patterns" value="Tissue enhanced (liver)"/>
</dbReference>
<dbReference type="MIM" id="614803">
    <property type="type" value="gene"/>
</dbReference>
<dbReference type="neXtProt" id="NX_Q5VZB9"/>
<dbReference type="OpenTargets" id="ENSG00000176399"/>
<dbReference type="PharmGKB" id="PA27384"/>
<dbReference type="VEuPathDB" id="HostDB:ENSG00000176399"/>
<dbReference type="eggNOG" id="KOG3815">
    <property type="taxonomic scope" value="Eukaryota"/>
</dbReference>
<dbReference type="GeneTree" id="ENSGT00940000160640"/>
<dbReference type="HOGENOM" id="CLU_038477_1_0_1"/>
<dbReference type="InParanoid" id="Q5VZB9"/>
<dbReference type="OMA" id="RELQFMY"/>
<dbReference type="OrthoDB" id="6162476at2759"/>
<dbReference type="PAN-GO" id="Q5VZB9">
    <property type="GO annotations" value="6 GO annotations based on evolutionary models"/>
</dbReference>
<dbReference type="PhylomeDB" id="Q5VZB9"/>
<dbReference type="TreeFam" id="TF317837"/>
<dbReference type="PathwayCommons" id="Q5VZB9"/>
<dbReference type="SignaLink" id="Q5VZB9"/>
<dbReference type="BioGRID-ORCS" id="63951">
    <property type="hits" value="14 hits in 1173 CRISPR screens"/>
</dbReference>
<dbReference type="GenomeRNAi" id="63951"/>
<dbReference type="Pharos" id="Q5VZB9">
    <property type="development level" value="Tbio"/>
</dbReference>
<dbReference type="PRO" id="PR:Q5VZB9"/>
<dbReference type="Proteomes" id="UP000005640">
    <property type="component" value="Chromosome 9"/>
</dbReference>
<dbReference type="RNAct" id="Q5VZB9">
    <property type="molecule type" value="protein"/>
</dbReference>
<dbReference type="Bgee" id="ENSG00000176399">
    <property type="expression patterns" value="Expressed in male germ line stem cell (sensu Vertebrata) in testis and 79 other cell types or tissues"/>
</dbReference>
<dbReference type="GO" id="GO:0000785">
    <property type="term" value="C:chromatin"/>
    <property type="evidence" value="ECO:0000247"/>
    <property type="project" value="NTNU_SB"/>
</dbReference>
<dbReference type="GO" id="GO:0005634">
    <property type="term" value="C:nucleus"/>
    <property type="evidence" value="ECO:0000318"/>
    <property type="project" value="GO_Central"/>
</dbReference>
<dbReference type="GO" id="GO:0000981">
    <property type="term" value="F:DNA-binding transcription factor activity, RNA polymerase II-specific"/>
    <property type="evidence" value="ECO:0000247"/>
    <property type="project" value="NTNU_SB"/>
</dbReference>
<dbReference type="GO" id="GO:0042802">
    <property type="term" value="F:identical protein binding"/>
    <property type="evidence" value="ECO:0007669"/>
    <property type="project" value="Ensembl"/>
</dbReference>
<dbReference type="GO" id="GO:0046872">
    <property type="term" value="F:metal ion binding"/>
    <property type="evidence" value="ECO:0007669"/>
    <property type="project" value="UniProtKB-KW"/>
</dbReference>
<dbReference type="GO" id="GO:0000978">
    <property type="term" value="F:RNA polymerase II cis-regulatory region sequence-specific DNA binding"/>
    <property type="evidence" value="ECO:0000318"/>
    <property type="project" value="GO_Central"/>
</dbReference>
<dbReference type="GO" id="GO:1990837">
    <property type="term" value="F:sequence-specific double-stranded DNA binding"/>
    <property type="evidence" value="ECO:0000314"/>
    <property type="project" value="ARUK-UCL"/>
</dbReference>
<dbReference type="GO" id="GO:0060179">
    <property type="term" value="P:male mating behavior"/>
    <property type="evidence" value="ECO:0007669"/>
    <property type="project" value="Ensembl"/>
</dbReference>
<dbReference type="GO" id="GO:0001541">
    <property type="term" value="P:ovarian follicle development"/>
    <property type="evidence" value="ECO:0007669"/>
    <property type="project" value="Ensembl"/>
</dbReference>
<dbReference type="GO" id="GO:0006357">
    <property type="term" value="P:regulation of transcription by RNA polymerase II"/>
    <property type="evidence" value="ECO:0000318"/>
    <property type="project" value="GO_Central"/>
</dbReference>
<dbReference type="GO" id="GO:0007548">
    <property type="term" value="P:sex differentiation"/>
    <property type="evidence" value="ECO:0000318"/>
    <property type="project" value="GO_Central"/>
</dbReference>
<dbReference type="CDD" id="cd14417">
    <property type="entry name" value="CUE_DMA_DMRTA1"/>
    <property type="match status" value="1"/>
</dbReference>
<dbReference type="FunFam" id="4.10.1040.10:FF:000001">
    <property type="entry name" value="doublesex- and mab-3-related transcription factor 1"/>
    <property type="match status" value="1"/>
</dbReference>
<dbReference type="Gene3D" id="4.10.1040.10">
    <property type="entry name" value="DM DNA-binding domain"/>
    <property type="match status" value="1"/>
</dbReference>
<dbReference type="InterPro" id="IPR001275">
    <property type="entry name" value="DM_DNA-bd"/>
</dbReference>
<dbReference type="InterPro" id="IPR036407">
    <property type="entry name" value="DM_DNA-bd_sf"/>
</dbReference>
<dbReference type="InterPro" id="IPR005173">
    <property type="entry name" value="DMA"/>
</dbReference>
<dbReference type="InterPro" id="IPR026607">
    <property type="entry name" value="DMRT"/>
</dbReference>
<dbReference type="InterPro" id="IPR046472">
    <property type="entry name" value="DMRT5_1_DMB_dom"/>
</dbReference>
<dbReference type="InterPro" id="IPR009060">
    <property type="entry name" value="UBA-like_sf"/>
</dbReference>
<dbReference type="PANTHER" id="PTHR12322">
    <property type="entry name" value="DOUBLESEX AND MAB-3 RELATED TRANSCRIPTION FACTOR DMRT"/>
    <property type="match status" value="1"/>
</dbReference>
<dbReference type="PANTHER" id="PTHR12322:SF71">
    <property type="entry name" value="DOUBLESEX- AND MAB-3-RELATED TRANSCRIPTION FACTOR A1"/>
    <property type="match status" value="1"/>
</dbReference>
<dbReference type="Pfam" id="PF00751">
    <property type="entry name" value="DM"/>
    <property type="match status" value="1"/>
</dbReference>
<dbReference type="Pfam" id="PF03474">
    <property type="entry name" value="DMA"/>
    <property type="match status" value="1"/>
</dbReference>
<dbReference type="Pfam" id="PF20624">
    <property type="entry name" value="DMRT5_DMB"/>
    <property type="match status" value="1"/>
</dbReference>
<dbReference type="SMART" id="SM00301">
    <property type="entry name" value="DM"/>
    <property type="match status" value="1"/>
</dbReference>
<dbReference type="SUPFAM" id="SSF82927">
    <property type="entry name" value="Cysteine-rich DNA binding domain, (DM domain)"/>
    <property type="match status" value="1"/>
</dbReference>
<dbReference type="SUPFAM" id="SSF46934">
    <property type="entry name" value="UBA-like"/>
    <property type="match status" value="1"/>
</dbReference>
<dbReference type="PROSITE" id="PS40000">
    <property type="entry name" value="DM_1"/>
    <property type="match status" value="1"/>
</dbReference>
<dbReference type="PROSITE" id="PS50809">
    <property type="entry name" value="DM_2"/>
    <property type="match status" value="1"/>
</dbReference>
<proteinExistence type="evidence at protein level"/>